<protein>
    <recommendedName>
        <fullName evidence="1">Erythronate-4-phosphate dehydrogenase</fullName>
        <ecNumber evidence="1">1.1.1.290</ecNumber>
    </recommendedName>
</protein>
<sequence length="376" mass="41483">MKIVVDENMPYVEPLFGALGEIIPVNGRTLTPEQVQDADVLLVRSVTRVNAALLDANPKLKFVGSATIGTDHVDLAYLARRGIPFSNAPGCNATAVGEFAFIAMLELAARFNSPLKGKVVGIVGAGNTGSATAKCLEAYGIKVLLNDPIKAAEGDPRHFVSLETLLHQADIISLHVPITRSGEHKTLHLFDEARLMSLKPNTWLVNCCRGDVIDNQALIKVKQQRDDLKLVLDVWEGEPHPMPELVPFAEFATPHIAGYSLEGKARGTFMLYQKLCELLAIPANKRLSELLPPFHFKAVELEQTPDEKALLQLARFVYDLRDDDAVFRNGFAKENGFDIMRKNHKHRREFSALALAYHGQSEVDWLSNLGFSGVGR</sequence>
<reference key="1">
    <citation type="submission" date="2006-08" db="EMBL/GenBank/DDBJ databases">
        <title>Complete sequence of Shewanella sp. MR-4.</title>
        <authorList>
            <consortium name="US DOE Joint Genome Institute"/>
            <person name="Copeland A."/>
            <person name="Lucas S."/>
            <person name="Lapidus A."/>
            <person name="Barry K."/>
            <person name="Detter J.C."/>
            <person name="Glavina del Rio T."/>
            <person name="Hammon N."/>
            <person name="Israni S."/>
            <person name="Dalin E."/>
            <person name="Tice H."/>
            <person name="Pitluck S."/>
            <person name="Kiss H."/>
            <person name="Brettin T."/>
            <person name="Bruce D."/>
            <person name="Han C."/>
            <person name="Tapia R."/>
            <person name="Gilna P."/>
            <person name="Schmutz J."/>
            <person name="Larimer F."/>
            <person name="Land M."/>
            <person name="Hauser L."/>
            <person name="Kyrpides N."/>
            <person name="Mikhailova N."/>
            <person name="Nealson K."/>
            <person name="Konstantinidis K."/>
            <person name="Klappenbach J."/>
            <person name="Tiedje J."/>
            <person name="Richardson P."/>
        </authorList>
    </citation>
    <scope>NUCLEOTIDE SEQUENCE [LARGE SCALE GENOMIC DNA]</scope>
    <source>
        <strain>MR-4</strain>
    </source>
</reference>
<dbReference type="EC" id="1.1.1.290" evidence="1"/>
<dbReference type="EMBL" id="CP000446">
    <property type="protein sequence ID" value="ABI38501.1"/>
    <property type="molecule type" value="Genomic_DNA"/>
</dbReference>
<dbReference type="RefSeq" id="WP_011622206.1">
    <property type="nucleotide sequence ID" value="NC_008321.1"/>
</dbReference>
<dbReference type="SMR" id="Q0HKB6"/>
<dbReference type="KEGG" id="she:Shewmr4_1423"/>
<dbReference type="HOGENOM" id="CLU_019796_4_0_6"/>
<dbReference type="UniPathway" id="UPA00244">
    <property type="reaction ID" value="UER00310"/>
</dbReference>
<dbReference type="GO" id="GO:0005737">
    <property type="term" value="C:cytoplasm"/>
    <property type="evidence" value="ECO:0007669"/>
    <property type="project" value="UniProtKB-SubCell"/>
</dbReference>
<dbReference type="GO" id="GO:0033711">
    <property type="term" value="F:4-phosphoerythronate dehydrogenase activity"/>
    <property type="evidence" value="ECO:0007669"/>
    <property type="project" value="UniProtKB-EC"/>
</dbReference>
<dbReference type="GO" id="GO:0051287">
    <property type="term" value="F:NAD binding"/>
    <property type="evidence" value="ECO:0007669"/>
    <property type="project" value="InterPro"/>
</dbReference>
<dbReference type="GO" id="GO:0046983">
    <property type="term" value="F:protein dimerization activity"/>
    <property type="evidence" value="ECO:0007669"/>
    <property type="project" value="InterPro"/>
</dbReference>
<dbReference type="GO" id="GO:0008615">
    <property type="term" value="P:pyridoxine biosynthetic process"/>
    <property type="evidence" value="ECO:0007669"/>
    <property type="project" value="UniProtKB-UniRule"/>
</dbReference>
<dbReference type="CDD" id="cd12158">
    <property type="entry name" value="ErythrP_dh"/>
    <property type="match status" value="1"/>
</dbReference>
<dbReference type="FunFam" id="3.40.50.720:FF:000890">
    <property type="entry name" value="Erythronate-4-phosphate dehydrogenase"/>
    <property type="match status" value="1"/>
</dbReference>
<dbReference type="Gene3D" id="3.30.1370.170">
    <property type="match status" value="1"/>
</dbReference>
<dbReference type="Gene3D" id="3.40.50.720">
    <property type="entry name" value="NAD(P)-binding Rossmann-like Domain"/>
    <property type="match status" value="2"/>
</dbReference>
<dbReference type="HAMAP" id="MF_01825">
    <property type="entry name" value="PdxB"/>
    <property type="match status" value="1"/>
</dbReference>
<dbReference type="InterPro" id="IPR050418">
    <property type="entry name" value="D-iso_2-hydroxyacid_DH_PdxB"/>
</dbReference>
<dbReference type="InterPro" id="IPR006139">
    <property type="entry name" value="D-isomer_2_OHA_DH_cat_dom"/>
</dbReference>
<dbReference type="InterPro" id="IPR029753">
    <property type="entry name" value="D-isomer_DH_CS"/>
</dbReference>
<dbReference type="InterPro" id="IPR006140">
    <property type="entry name" value="D-isomer_DH_NAD-bd"/>
</dbReference>
<dbReference type="InterPro" id="IPR020921">
    <property type="entry name" value="Erythronate-4-P_DHase"/>
</dbReference>
<dbReference type="InterPro" id="IPR024531">
    <property type="entry name" value="Erythronate-4-P_DHase_dimer"/>
</dbReference>
<dbReference type="InterPro" id="IPR036291">
    <property type="entry name" value="NAD(P)-bd_dom_sf"/>
</dbReference>
<dbReference type="InterPro" id="IPR038251">
    <property type="entry name" value="PdxB_dimer_sf"/>
</dbReference>
<dbReference type="PANTHER" id="PTHR43761:SF1">
    <property type="entry name" value="D-ISOMER SPECIFIC 2-HYDROXYACID DEHYDROGENASE CATALYTIC DOMAIN-CONTAINING PROTEIN-RELATED"/>
    <property type="match status" value="1"/>
</dbReference>
<dbReference type="PANTHER" id="PTHR43761">
    <property type="entry name" value="D-ISOMER SPECIFIC 2-HYDROXYACID DEHYDROGENASE FAMILY PROTEIN (AFU_ORTHOLOGUE AFUA_1G13630)"/>
    <property type="match status" value="1"/>
</dbReference>
<dbReference type="Pfam" id="PF00389">
    <property type="entry name" value="2-Hacid_dh"/>
    <property type="match status" value="1"/>
</dbReference>
<dbReference type="Pfam" id="PF02826">
    <property type="entry name" value="2-Hacid_dh_C"/>
    <property type="match status" value="1"/>
</dbReference>
<dbReference type="Pfam" id="PF11890">
    <property type="entry name" value="DUF3410"/>
    <property type="match status" value="1"/>
</dbReference>
<dbReference type="SUPFAM" id="SSF52283">
    <property type="entry name" value="Formate/glycerate dehydrogenase catalytic domain-like"/>
    <property type="match status" value="1"/>
</dbReference>
<dbReference type="SUPFAM" id="SSF51735">
    <property type="entry name" value="NAD(P)-binding Rossmann-fold domains"/>
    <property type="match status" value="1"/>
</dbReference>
<dbReference type="PROSITE" id="PS00671">
    <property type="entry name" value="D_2_HYDROXYACID_DH_3"/>
    <property type="match status" value="1"/>
</dbReference>
<feature type="chain" id="PRO_0000297470" description="Erythronate-4-phosphate dehydrogenase">
    <location>
        <begin position="1"/>
        <end position="376"/>
    </location>
</feature>
<feature type="active site" evidence="1">
    <location>
        <position position="209"/>
    </location>
</feature>
<feature type="active site" evidence="1">
    <location>
        <position position="238"/>
    </location>
</feature>
<feature type="active site" description="Proton donor" evidence="1">
    <location>
        <position position="255"/>
    </location>
</feature>
<feature type="binding site" evidence="1">
    <location>
        <position position="45"/>
    </location>
    <ligand>
        <name>substrate</name>
    </ligand>
</feature>
<feature type="binding site" evidence="1">
    <location>
        <position position="67"/>
    </location>
    <ligand>
        <name>substrate</name>
    </ligand>
</feature>
<feature type="binding site" evidence="1">
    <location>
        <position position="147"/>
    </location>
    <ligand>
        <name>NAD(+)</name>
        <dbReference type="ChEBI" id="CHEBI:57540"/>
    </ligand>
</feature>
<feature type="binding site" evidence="1">
    <location>
        <position position="233"/>
    </location>
    <ligand>
        <name>NAD(+)</name>
        <dbReference type="ChEBI" id="CHEBI:57540"/>
    </ligand>
</feature>
<feature type="binding site" evidence="1">
    <location>
        <position position="258"/>
    </location>
    <ligand>
        <name>NAD(+)</name>
        <dbReference type="ChEBI" id="CHEBI:57540"/>
    </ligand>
</feature>
<feature type="binding site" evidence="1">
    <location>
        <position position="259"/>
    </location>
    <ligand>
        <name>substrate</name>
    </ligand>
</feature>
<name>PDXB_SHESM</name>
<proteinExistence type="inferred from homology"/>
<gene>
    <name evidence="1" type="primary">pdxB</name>
    <name type="ordered locus">Shewmr4_1423</name>
</gene>
<accession>Q0HKB6</accession>
<evidence type="ECO:0000255" key="1">
    <source>
        <dbReference type="HAMAP-Rule" id="MF_01825"/>
    </source>
</evidence>
<keyword id="KW-0963">Cytoplasm</keyword>
<keyword id="KW-0520">NAD</keyword>
<keyword id="KW-0560">Oxidoreductase</keyword>
<keyword id="KW-0664">Pyridoxine biosynthesis</keyword>
<comment type="function">
    <text evidence="1">Catalyzes the oxidation of erythronate-4-phosphate to 3-hydroxy-2-oxo-4-phosphonooxybutanoate.</text>
</comment>
<comment type="catalytic activity">
    <reaction evidence="1">
        <text>4-phospho-D-erythronate + NAD(+) = (R)-3-hydroxy-2-oxo-4-phosphooxybutanoate + NADH + H(+)</text>
        <dbReference type="Rhea" id="RHEA:18829"/>
        <dbReference type="ChEBI" id="CHEBI:15378"/>
        <dbReference type="ChEBI" id="CHEBI:57540"/>
        <dbReference type="ChEBI" id="CHEBI:57945"/>
        <dbReference type="ChEBI" id="CHEBI:58538"/>
        <dbReference type="ChEBI" id="CHEBI:58766"/>
        <dbReference type="EC" id="1.1.1.290"/>
    </reaction>
</comment>
<comment type="pathway">
    <text evidence="1">Cofactor biosynthesis; pyridoxine 5'-phosphate biosynthesis; pyridoxine 5'-phosphate from D-erythrose 4-phosphate: step 2/5.</text>
</comment>
<comment type="subunit">
    <text evidence="1">Homodimer.</text>
</comment>
<comment type="subcellular location">
    <subcellularLocation>
        <location evidence="1">Cytoplasm</location>
    </subcellularLocation>
</comment>
<comment type="similarity">
    <text evidence="1">Belongs to the D-isomer specific 2-hydroxyacid dehydrogenase family. PdxB subfamily.</text>
</comment>
<organism>
    <name type="scientific">Shewanella sp. (strain MR-4)</name>
    <dbReference type="NCBI Taxonomy" id="60480"/>
    <lineage>
        <taxon>Bacteria</taxon>
        <taxon>Pseudomonadati</taxon>
        <taxon>Pseudomonadota</taxon>
        <taxon>Gammaproteobacteria</taxon>
        <taxon>Alteromonadales</taxon>
        <taxon>Shewanellaceae</taxon>
        <taxon>Shewanella</taxon>
    </lineage>
</organism>